<gene>
    <name evidence="1" type="primary">rpmH</name>
    <name type="ordered locus">Dalk_4136</name>
</gene>
<accession>B8FMV0</accession>
<proteinExistence type="inferred from homology"/>
<dbReference type="EMBL" id="CP001322">
    <property type="protein sequence ID" value="ACL05820.1"/>
    <property type="molecule type" value="Genomic_DNA"/>
</dbReference>
<dbReference type="RefSeq" id="WP_015948867.1">
    <property type="nucleotide sequence ID" value="NC_011768.1"/>
</dbReference>
<dbReference type="SMR" id="B8FMV0"/>
<dbReference type="KEGG" id="dal:Dalk_4136"/>
<dbReference type="eggNOG" id="COG0230">
    <property type="taxonomic scope" value="Bacteria"/>
</dbReference>
<dbReference type="HOGENOM" id="CLU_129938_2_0_7"/>
<dbReference type="Proteomes" id="UP000000739">
    <property type="component" value="Chromosome"/>
</dbReference>
<dbReference type="GO" id="GO:1990904">
    <property type="term" value="C:ribonucleoprotein complex"/>
    <property type="evidence" value="ECO:0007669"/>
    <property type="project" value="UniProtKB-KW"/>
</dbReference>
<dbReference type="GO" id="GO:0005840">
    <property type="term" value="C:ribosome"/>
    <property type="evidence" value="ECO:0007669"/>
    <property type="project" value="UniProtKB-KW"/>
</dbReference>
<dbReference type="GO" id="GO:0003735">
    <property type="term" value="F:structural constituent of ribosome"/>
    <property type="evidence" value="ECO:0007669"/>
    <property type="project" value="InterPro"/>
</dbReference>
<dbReference type="GO" id="GO:0006412">
    <property type="term" value="P:translation"/>
    <property type="evidence" value="ECO:0007669"/>
    <property type="project" value="UniProtKB-UniRule"/>
</dbReference>
<dbReference type="FunFam" id="1.10.287.3980:FF:000001">
    <property type="entry name" value="Mitochondrial ribosomal protein L34"/>
    <property type="match status" value="1"/>
</dbReference>
<dbReference type="Gene3D" id="1.10.287.3980">
    <property type="match status" value="1"/>
</dbReference>
<dbReference type="HAMAP" id="MF_00391">
    <property type="entry name" value="Ribosomal_bL34"/>
    <property type="match status" value="1"/>
</dbReference>
<dbReference type="InterPro" id="IPR000271">
    <property type="entry name" value="Ribosomal_bL34"/>
</dbReference>
<dbReference type="InterPro" id="IPR020939">
    <property type="entry name" value="Ribosomal_bL34_CS"/>
</dbReference>
<dbReference type="NCBIfam" id="TIGR01030">
    <property type="entry name" value="rpmH_bact"/>
    <property type="match status" value="1"/>
</dbReference>
<dbReference type="PANTHER" id="PTHR14503:SF4">
    <property type="entry name" value="LARGE RIBOSOMAL SUBUNIT PROTEIN BL34M"/>
    <property type="match status" value="1"/>
</dbReference>
<dbReference type="PANTHER" id="PTHR14503">
    <property type="entry name" value="MITOCHONDRIAL RIBOSOMAL PROTEIN 34 FAMILY MEMBER"/>
    <property type="match status" value="1"/>
</dbReference>
<dbReference type="Pfam" id="PF00468">
    <property type="entry name" value="Ribosomal_L34"/>
    <property type="match status" value="1"/>
</dbReference>
<dbReference type="PROSITE" id="PS00784">
    <property type="entry name" value="RIBOSOMAL_L34"/>
    <property type="match status" value="1"/>
</dbReference>
<organism>
    <name type="scientific">Desulfatibacillum aliphaticivorans</name>
    <dbReference type="NCBI Taxonomy" id="218208"/>
    <lineage>
        <taxon>Bacteria</taxon>
        <taxon>Pseudomonadati</taxon>
        <taxon>Thermodesulfobacteriota</taxon>
        <taxon>Desulfobacteria</taxon>
        <taxon>Desulfobacterales</taxon>
        <taxon>Desulfatibacillaceae</taxon>
        <taxon>Desulfatibacillum</taxon>
    </lineage>
</organism>
<evidence type="ECO:0000255" key="1">
    <source>
        <dbReference type="HAMAP-Rule" id="MF_00391"/>
    </source>
</evidence>
<evidence type="ECO:0000305" key="2"/>
<protein>
    <recommendedName>
        <fullName evidence="1">Large ribosomal subunit protein bL34</fullName>
    </recommendedName>
    <alternativeName>
        <fullName evidence="2">50S ribosomal protein L34</fullName>
    </alternativeName>
</protein>
<sequence>MKRTFQPSKIKRARTHGFLKRMSTKAGRRIIKRRRARGRKRLSA</sequence>
<comment type="similarity">
    <text evidence="1">Belongs to the bacterial ribosomal protein bL34 family.</text>
</comment>
<name>RL34_DESAL</name>
<reference key="1">
    <citation type="journal article" date="2012" name="Environ. Microbiol.">
        <title>The genome sequence of Desulfatibacillum alkenivorans AK-01: a blueprint for anaerobic alkane oxidation.</title>
        <authorList>
            <person name="Callaghan A.V."/>
            <person name="Morris B.E."/>
            <person name="Pereira I.A."/>
            <person name="McInerney M.J."/>
            <person name="Austin R.N."/>
            <person name="Groves J.T."/>
            <person name="Kukor J.J."/>
            <person name="Suflita J.M."/>
            <person name="Young L.Y."/>
            <person name="Zylstra G.J."/>
            <person name="Wawrik B."/>
        </authorList>
    </citation>
    <scope>NUCLEOTIDE SEQUENCE [LARGE SCALE GENOMIC DNA]</scope>
    <source>
        <strain>AK-01</strain>
    </source>
</reference>
<keyword id="KW-1185">Reference proteome</keyword>
<keyword id="KW-0687">Ribonucleoprotein</keyword>
<keyword id="KW-0689">Ribosomal protein</keyword>
<feature type="chain" id="PRO_1000196034" description="Large ribosomal subunit protein bL34">
    <location>
        <begin position="1"/>
        <end position="44"/>
    </location>
</feature>